<gene>
    <name type="primary">PLEKHO1</name>
</gene>
<evidence type="ECO:0000250" key="1"/>
<evidence type="ECO:0000250" key="2">
    <source>
        <dbReference type="UniProtKB" id="Q5BJM5"/>
    </source>
</evidence>
<evidence type="ECO:0000250" key="3">
    <source>
        <dbReference type="UniProtKB" id="Q9JIY0"/>
    </source>
</evidence>
<evidence type="ECO:0000255" key="4"/>
<evidence type="ECO:0000255" key="5">
    <source>
        <dbReference type="PROSITE-ProRule" id="PRU00145"/>
    </source>
</evidence>
<evidence type="ECO:0000256" key="6">
    <source>
        <dbReference type="SAM" id="MobiDB-lite"/>
    </source>
</evidence>
<sequence length="409" mass="46395">MMKKNNSTKRGPQDGNHQCAPPEKVGWVRKFCGKGIFREIWKNRYVVLKGDQLYISEKEVKDEKNIQEVFDLSDYEKCEELRKSKSRSKKNHSKFTLAHSKQPGNTAPNLIFLAVSPEEKESWINALNSAITRAKNRVLDEVTVEEDSYLAHPTRDRAKIQHSRRPPTRGHLMAVASTSTSDGMLTLDLIQEEDPSPEEPTSCAESFRVDLDKSVAQLAGSRRRADSDRIQPSSDRASGLPRLWEKPDKGATYTPQAPKKLTATEKSRCASLEEILSQRDAVPAHTLQRRAEDPPTPIPHAPGQLSRIQDLVARKLEKTQELLAEVQGLGDGKRKAKEPPRSPPDSESEQLLLETERLLGEASSNWSQAKRVLQEVRELRDLYRQMDLQTPDSHLRQTTQHSQYRKSLM</sequence>
<dbReference type="EMBL" id="BC134615">
    <property type="protein sequence ID" value="AAI34616.1"/>
    <property type="molecule type" value="mRNA"/>
</dbReference>
<dbReference type="RefSeq" id="NP_001077266.1">
    <property type="nucleotide sequence ID" value="NM_001083797.1"/>
</dbReference>
<dbReference type="FunCoup" id="A4IFK0">
    <property type="interactions" value="299"/>
</dbReference>
<dbReference type="STRING" id="9913.ENSBTAP00000006381"/>
<dbReference type="PaxDb" id="9913-ENSBTAP00000006381"/>
<dbReference type="GeneID" id="788251"/>
<dbReference type="KEGG" id="bta:788251"/>
<dbReference type="CTD" id="51177"/>
<dbReference type="eggNOG" id="ENOG502QSPU">
    <property type="taxonomic scope" value="Eukaryota"/>
</dbReference>
<dbReference type="InParanoid" id="A4IFK0"/>
<dbReference type="OrthoDB" id="6358316at2759"/>
<dbReference type="Proteomes" id="UP000009136">
    <property type="component" value="Unplaced"/>
</dbReference>
<dbReference type="GO" id="GO:0005737">
    <property type="term" value="C:cytoplasm"/>
    <property type="evidence" value="ECO:0007669"/>
    <property type="project" value="UniProtKB-SubCell"/>
</dbReference>
<dbReference type="GO" id="GO:0036195">
    <property type="term" value="C:muscle cell projection membrane"/>
    <property type="evidence" value="ECO:0000318"/>
    <property type="project" value="GO_Central"/>
</dbReference>
<dbReference type="GO" id="GO:0005634">
    <property type="term" value="C:nucleus"/>
    <property type="evidence" value="ECO:0007669"/>
    <property type="project" value="UniProtKB-SubCell"/>
</dbReference>
<dbReference type="GO" id="GO:0032587">
    <property type="term" value="C:ruffle membrane"/>
    <property type="evidence" value="ECO:0000318"/>
    <property type="project" value="GO_Central"/>
</dbReference>
<dbReference type="GO" id="GO:1901739">
    <property type="term" value="P:regulation of myoblast fusion"/>
    <property type="evidence" value="ECO:0000318"/>
    <property type="project" value="GO_Central"/>
</dbReference>
<dbReference type="CDD" id="cd13317">
    <property type="entry name" value="PH_PLEKHO1_PLEKHO2"/>
    <property type="match status" value="1"/>
</dbReference>
<dbReference type="FunFam" id="2.30.29.30:FF:000237">
    <property type="entry name" value="pleckstrin homology domain-containing family O member 1"/>
    <property type="match status" value="1"/>
</dbReference>
<dbReference type="Gene3D" id="2.30.29.30">
    <property type="entry name" value="Pleckstrin-homology domain (PH domain)/Phosphotyrosine-binding domain (PTB)"/>
    <property type="match status" value="1"/>
</dbReference>
<dbReference type="InterPro" id="IPR011993">
    <property type="entry name" value="PH-like_dom_sf"/>
</dbReference>
<dbReference type="InterPro" id="IPR001849">
    <property type="entry name" value="PH_domain"/>
</dbReference>
<dbReference type="InterPro" id="IPR043448">
    <property type="entry name" value="PKHO1/2"/>
</dbReference>
<dbReference type="PANTHER" id="PTHR15871">
    <property type="entry name" value="PH DOMAIN-CONTAINING PROTEIN"/>
    <property type="match status" value="1"/>
</dbReference>
<dbReference type="PANTHER" id="PTHR15871:SF1">
    <property type="entry name" value="PLECKSTRIN HOMOLOGY DOMAIN-CONTAINING FAMILY O MEMBER 1"/>
    <property type="match status" value="1"/>
</dbReference>
<dbReference type="Pfam" id="PF00169">
    <property type="entry name" value="PH"/>
    <property type="match status" value="1"/>
</dbReference>
<dbReference type="SMART" id="SM00233">
    <property type="entry name" value="PH"/>
    <property type="match status" value="1"/>
</dbReference>
<dbReference type="SUPFAM" id="SSF50729">
    <property type="entry name" value="PH domain-like"/>
    <property type="match status" value="1"/>
</dbReference>
<dbReference type="PROSITE" id="PS50003">
    <property type="entry name" value="PH_DOMAIN"/>
    <property type="match status" value="1"/>
</dbReference>
<organism>
    <name type="scientific">Bos taurus</name>
    <name type="common">Bovine</name>
    <dbReference type="NCBI Taxonomy" id="9913"/>
    <lineage>
        <taxon>Eukaryota</taxon>
        <taxon>Metazoa</taxon>
        <taxon>Chordata</taxon>
        <taxon>Craniata</taxon>
        <taxon>Vertebrata</taxon>
        <taxon>Euteleostomi</taxon>
        <taxon>Mammalia</taxon>
        <taxon>Eutheria</taxon>
        <taxon>Laurasiatheria</taxon>
        <taxon>Artiodactyla</taxon>
        <taxon>Ruminantia</taxon>
        <taxon>Pecora</taxon>
        <taxon>Bovidae</taxon>
        <taxon>Bovinae</taxon>
        <taxon>Bos</taxon>
    </lineage>
</organism>
<name>PKHO1_BOVIN</name>
<comment type="function">
    <text evidence="1">Plays a role in the regulation of the actin cytoskeleton through its interactions with actin capping protein (CP). May function to target CK2 to the plasma membrane thereby serving as an adapter to facilitate the phosphorylation of CP by protein kinase 2 (CK2). Appears to target ATM to the plasma membrane. Also implicated in PI3K-regulated muscle differentiation, the regulation of AP-1 activity (plasma membrane bound AP-1 regulator that translocates to the nucleus) and the promotion of apoptosis induced by tumor necrosis factor TNF. When bound to PKB, it inhibits it probably by decreasing PKB level of phosphorylation (By similarity).</text>
</comment>
<comment type="subunit">
    <text evidence="1">Heterodimer or homodimer. Interacts with CK2 and actin capping subunits (capping protein CP-alpha and CP-beta). CKIP1 and CK2 together inhibit the activity of actin capping protein at the barbed ends of actin filaments. Interacts with ATM, IFP35, JUN, JUND, NMI and PI3K. Interacts with AKT1, AKT2 and AKT3 (each isozyme of PKB), PtdIns(3,5)P2, PtdIns(4,5)P2 and PtdIns(3,4,5)P2 (By similarity).</text>
</comment>
<comment type="subcellular location">
    <subcellularLocation>
        <location evidence="1">Membrane</location>
    </subcellularLocation>
    <subcellularLocation>
        <location evidence="1">Nucleus</location>
    </subcellularLocation>
    <subcellularLocation>
        <location evidence="1">Cytoplasm</location>
    </subcellularLocation>
</comment>
<comment type="PTM">
    <text evidence="1">C-terminal fragments could be released during apoptosis via caspase-3-dependent cleavage.</text>
</comment>
<reference key="1">
    <citation type="submission" date="2007-03" db="EMBL/GenBank/DDBJ databases">
        <authorList>
            <consortium name="NIH - Mammalian Gene Collection (MGC) project"/>
        </authorList>
    </citation>
    <scope>NUCLEOTIDE SEQUENCE [LARGE SCALE MRNA]</scope>
    <source>
        <strain>Hereford</strain>
        <tissue>Fetal skin</tissue>
    </source>
</reference>
<proteinExistence type="evidence at transcript level"/>
<accession>A4IFK0</accession>
<keyword id="KW-0963">Cytoplasm</keyword>
<keyword id="KW-0472">Membrane</keyword>
<keyword id="KW-0539">Nucleus</keyword>
<keyword id="KW-0597">Phosphoprotein</keyword>
<keyword id="KW-1185">Reference proteome</keyword>
<keyword id="KW-0043">Tumor suppressor</keyword>
<protein>
    <recommendedName>
        <fullName>Pleckstrin homology domain-containing family O member 1</fullName>
        <shortName>PH domain-containing family O member 1</shortName>
    </recommendedName>
</protein>
<feature type="chain" id="PRO_0000310422" description="Pleckstrin homology domain-containing family O member 1">
    <location>
        <begin position="1"/>
        <end position="409"/>
    </location>
</feature>
<feature type="domain" description="PH" evidence="5">
    <location>
        <begin position="21"/>
        <end position="132"/>
    </location>
</feature>
<feature type="region of interest" description="Disordered" evidence="6">
    <location>
        <begin position="1"/>
        <end position="20"/>
    </location>
</feature>
<feature type="region of interest" description="Interaction with capping proteins (CPs)" evidence="1">
    <location>
        <begin position="133"/>
        <end position="193"/>
    </location>
</feature>
<feature type="region of interest" description="Interaction with ATM, CKIP, IFP35 and NMI" evidence="1">
    <location>
        <begin position="136"/>
        <end position="308"/>
    </location>
</feature>
<feature type="region of interest" description="Disordered" evidence="6">
    <location>
        <begin position="218"/>
        <end position="304"/>
    </location>
</feature>
<feature type="region of interest" description="Negative regulator of AP-1 activity" evidence="1">
    <location>
        <begin position="308"/>
        <end position="409"/>
    </location>
</feature>
<feature type="region of interest" description="Disordered" evidence="6">
    <location>
        <begin position="325"/>
        <end position="350"/>
    </location>
</feature>
<feature type="region of interest" description="Disordered" evidence="6">
    <location>
        <begin position="390"/>
        <end position="409"/>
    </location>
</feature>
<feature type="compositionally biased region" description="Basic and acidic residues" evidence="6">
    <location>
        <begin position="331"/>
        <end position="340"/>
    </location>
</feature>
<feature type="compositionally biased region" description="Polar residues" evidence="6">
    <location>
        <begin position="390"/>
        <end position="402"/>
    </location>
</feature>
<feature type="site" description="Interacts with capping protein" evidence="1">
    <location>
        <position position="155"/>
    </location>
</feature>
<feature type="site" description="Interacts with capping protein" evidence="1">
    <location>
        <position position="157"/>
    </location>
</feature>
<feature type="site" description="Cleavage; by caspase-3" evidence="4">
    <location>
        <begin position="310"/>
        <end position="311"/>
    </location>
</feature>
<feature type="site" description="Cleavage; by caspase-3" evidence="4">
    <location>
        <begin position="345"/>
        <end position="346"/>
    </location>
</feature>
<feature type="modified residue" description="Phosphoserine" evidence="3">
    <location>
        <position position="227"/>
    </location>
</feature>
<feature type="modified residue" description="Phosphoserine" evidence="3">
    <location>
        <position position="271"/>
    </location>
</feature>
<feature type="modified residue" description="Phosphoserine" evidence="2">
    <location>
        <position position="342"/>
    </location>
</feature>